<organism>
    <name type="scientific">Francisella philomiragia subsp. philomiragia (strain ATCC 25017 / CCUG 19701 / FSC 153 / O#319-036)</name>
    <dbReference type="NCBI Taxonomy" id="484022"/>
    <lineage>
        <taxon>Bacteria</taxon>
        <taxon>Pseudomonadati</taxon>
        <taxon>Pseudomonadota</taxon>
        <taxon>Gammaproteobacteria</taxon>
        <taxon>Thiotrichales</taxon>
        <taxon>Francisellaceae</taxon>
        <taxon>Francisella</taxon>
    </lineage>
</organism>
<protein>
    <recommendedName>
        <fullName evidence="1">Hydroxyacylglutathione hydrolase</fullName>
        <ecNumber evidence="1">3.1.2.6</ecNumber>
    </recommendedName>
    <alternativeName>
        <fullName evidence="1">Glyoxalase II</fullName>
        <shortName evidence="1">Glx II</shortName>
    </alternativeName>
</protein>
<name>GLO2_FRAP2</name>
<comment type="function">
    <text evidence="1">Thiolesterase that catalyzes the hydrolysis of S-D-lactoyl-glutathione to form glutathione and D-lactic acid.</text>
</comment>
<comment type="catalytic activity">
    <reaction evidence="1">
        <text>an S-(2-hydroxyacyl)glutathione + H2O = a 2-hydroxy carboxylate + glutathione + H(+)</text>
        <dbReference type="Rhea" id="RHEA:21864"/>
        <dbReference type="ChEBI" id="CHEBI:15377"/>
        <dbReference type="ChEBI" id="CHEBI:15378"/>
        <dbReference type="ChEBI" id="CHEBI:57925"/>
        <dbReference type="ChEBI" id="CHEBI:58896"/>
        <dbReference type="ChEBI" id="CHEBI:71261"/>
        <dbReference type="EC" id="3.1.2.6"/>
    </reaction>
</comment>
<comment type="cofactor">
    <cofactor evidence="1">
        <name>Zn(2+)</name>
        <dbReference type="ChEBI" id="CHEBI:29105"/>
    </cofactor>
    <text evidence="1">Binds 2 Zn(2+) ions per subunit.</text>
</comment>
<comment type="pathway">
    <text evidence="1">Secondary metabolite metabolism; methylglyoxal degradation; (R)-lactate from methylglyoxal: step 2/2.</text>
</comment>
<comment type="subunit">
    <text evidence="1">Monomer.</text>
</comment>
<comment type="similarity">
    <text evidence="1">Belongs to the metallo-beta-lactamase superfamily. Glyoxalase II family.</text>
</comment>
<gene>
    <name evidence="1" type="primary">gloB</name>
    <name type="ordered locus">Fphi_1316</name>
</gene>
<dbReference type="EC" id="3.1.2.6" evidence="1"/>
<dbReference type="EMBL" id="CP000937">
    <property type="protein sequence ID" value="ABZ87541.1"/>
    <property type="molecule type" value="Genomic_DNA"/>
</dbReference>
<dbReference type="SMR" id="B0TXY0"/>
<dbReference type="KEGG" id="fph:Fphi_1316"/>
<dbReference type="eggNOG" id="COG0491">
    <property type="taxonomic scope" value="Bacteria"/>
</dbReference>
<dbReference type="HOGENOM" id="CLU_030571_4_1_6"/>
<dbReference type="UniPathway" id="UPA00619">
    <property type="reaction ID" value="UER00676"/>
</dbReference>
<dbReference type="GO" id="GO:0004416">
    <property type="term" value="F:hydroxyacylglutathione hydrolase activity"/>
    <property type="evidence" value="ECO:0007669"/>
    <property type="project" value="UniProtKB-UniRule"/>
</dbReference>
<dbReference type="GO" id="GO:0046872">
    <property type="term" value="F:metal ion binding"/>
    <property type="evidence" value="ECO:0007669"/>
    <property type="project" value="UniProtKB-KW"/>
</dbReference>
<dbReference type="GO" id="GO:0019243">
    <property type="term" value="P:methylglyoxal catabolic process to D-lactate via S-lactoyl-glutathione"/>
    <property type="evidence" value="ECO:0007669"/>
    <property type="project" value="InterPro"/>
</dbReference>
<dbReference type="CDD" id="cd07723">
    <property type="entry name" value="hydroxyacylglutathione_hydrolase_MBL-fold"/>
    <property type="match status" value="1"/>
</dbReference>
<dbReference type="Gene3D" id="3.60.15.10">
    <property type="entry name" value="Ribonuclease Z/Hydroxyacylglutathione hydrolase-like"/>
    <property type="match status" value="1"/>
</dbReference>
<dbReference type="HAMAP" id="MF_01374">
    <property type="entry name" value="Glyoxalase_2"/>
    <property type="match status" value="1"/>
</dbReference>
<dbReference type="InterPro" id="IPR035680">
    <property type="entry name" value="Clx_II_MBL"/>
</dbReference>
<dbReference type="InterPro" id="IPR050110">
    <property type="entry name" value="Glyoxalase_II_hydrolase"/>
</dbReference>
<dbReference type="InterPro" id="IPR032282">
    <property type="entry name" value="HAGH_C"/>
</dbReference>
<dbReference type="InterPro" id="IPR017782">
    <property type="entry name" value="Hydroxyacylglutathione_Hdrlase"/>
</dbReference>
<dbReference type="InterPro" id="IPR001279">
    <property type="entry name" value="Metallo-B-lactamas"/>
</dbReference>
<dbReference type="InterPro" id="IPR036866">
    <property type="entry name" value="RibonucZ/Hydroxyglut_hydro"/>
</dbReference>
<dbReference type="PANTHER" id="PTHR43705">
    <property type="entry name" value="HYDROXYACYLGLUTATHIONE HYDROLASE"/>
    <property type="match status" value="1"/>
</dbReference>
<dbReference type="PANTHER" id="PTHR43705:SF1">
    <property type="entry name" value="HYDROXYACYLGLUTATHIONE HYDROLASE GLOB"/>
    <property type="match status" value="1"/>
</dbReference>
<dbReference type="Pfam" id="PF16123">
    <property type="entry name" value="HAGH_C"/>
    <property type="match status" value="1"/>
</dbReference>
<dbReference type="Pfam" id="PF00753">
    <property type="entry name" value="Lactamase_B"/>
    <property type="match status" value="1"/>
</dbReference>
<dbReference type="SMART" id="SM00849">
    <property type="entry name" value="Lactamase_B"/>
    <property type="match status" value="1"/>
</dbReference>
<dbReference type="SUPFAM" id="SSF56281">
    <property type="entry name" value="Metallo-hydrolase/oxidoreductase"/>
    <property type="match status" value="1"/>
</dbReference>
<feature type="chain" id="PRO_1000087280" description="Hydroxyacylglutathione hydrolase">
    <location>
        <begin position="1"/>
        <end position="252"/>
    </location>
</feature>
<feature type="binding site" evidence="1">
    <location>
        <position position="54"/>
    </location>
    <ligand>
        <name>Zn(2+)</name>
        <dbReference type="ChEBI" id="CHEBI:29105"/>
        <label>1</label>
    </ligand>
</feature>
<feature type="binding site" evidence="1">
    <location>
        <position position="56"/>
    </location>
    <ligand>
        <name>Zn(2+)</name>
        <dbReference type="ChEBI" id="CHEBI:29105"/>
        <label>1</label>
    </ligand>
</feature>
<feature type="binding site" evidence="1">
    <location>
        <position position="58"/>
    </location>
    <ligand>
        <name>Zn(2+)</name>
        <dbReference type="ChEBI" id="CHEBI:29105"/>
        <label>2</label>
    </ligand>
</feature>
<feature type="binding site" evidence="1">
    <location>
        <position position="59"/>
    </location>
    <ligand>
        <name>Zn(2+)</name>
        <dbReference type="ChEBI" id="CHEBI:29105"/>
        <label>2</label>
    </ligand>
</feature>
<feature type="binding site" evidence="1">
    <location>
        <position position="111"/>
    </location>
    <ligand>
        <name>Zn(2+)</name>
        <dbReference type="ChEBI" id="CHEBI:29105"/>
        <label>1</label>
    </ligand>
</feature>
<feature type="binding site" evidence="1">
    <location>
        <position position="130"/>
    </location>
    <ligand>
        <name>Zn(2+)</name>
        <dbReference type="ChEBI" id="CHEBI:29105"/>
        <label>1</label>
    </ligand>
</feature>
<feature type="binding site" evidence="1">
    <location>
        <position position="130"/>
    </location>
    <ligand>
        <name>Zn(2+)</name>
        <dbReference type="ChEBI" id="CHEBI:29105"/>
        <label>2</label>
    </ligand>
</feature>
<feature type="binding site" evidence="1">
    <location>
        <position position="170"/>
    </location>
    <ligand>
        <name>Zn(2+)</name>
        <dbReference type="ChEBI" id="CHEBI:29105"/>
        <label>2</label>
    </ligand>
</feature>
<proteinExistence type="inferred from homology"/>
<evidence type="ECO:0000255" key="1">
    <source>
        <dbReference type="HAMAP-Rule" id="MF_01374"/>
    </source>
</evidence>
<keyword id="KW-0378">Hydrolase</keyword>
<keyword id="KW-0479">Metal-binding</keyword>
<keyword id="KW-0862">Zinc</keyword>
<sequence length="252" mass="28949">MQVKRWFLNNSLRNYQYLLYDENYAIVIDPLKADIFDEFIKQNTLKLEAILITHRHGDHIAGVKKLLEIYPDALVYAYADNELFKPNIYVADGDFVDFGFTSCKVMYTPGHIDDHVCFLFEKEKALFCGDTLFNAGVGGVHAASADVNQLYDSVVKISSLDGDIKPYPAHDYWQSNLDFALSILPNDESFNYYRNQVAELAAEHKPVVNLAEESKLNIFIRSISDKSLLQALPEYRLGREMFVKLRKLKNNF</sequence>
<reference key="1">
    <citation type="submission" date="2007-12" db="EMBL/GenBank/DDBJ databases">
        <title>Complete sequence of chromosome of Francisella philomiragia subsp. philomiragia ATCC 25017.</title>
        <authorList>
            <consortium name="US DOE Joint Genome Institute"/>
            <person name="Copeland A."/>
            <person name="Lucas S."/>
            <person name="Lapidus A."/>
            <person name="Barry K."/>
            <person name="Detter J.C."/>
            <person name="Glavina del Rio T."/>
            <person name="Hammon N."/>
            <person name="Israni S."/>
            <person name="Dalin E."/>
            <person name="Tice H."/>
            <person name="Pitluck S."/>
            <person name="Chain P."/>
            <person name="Malfatti S."/>
            <person name="Shin M."/>
            <person name="Vergez L."/>
            <person name="Schmutz J."/>
            <person name="Larimer F."/>
            <person name="Land M."/>
            <person name="Hauser L."/>
            <person name="Richardson P."/>
        </authorList>
    </citation>
    <scope>NUCLEOTIDE SEQUENCE [LARGE SCALE GENOMIC DNA]</scope>
    <source>
        <strain>ATCC 25017 / CCUG 19701 / FSC 153 / O#319-036</strain>
    </source>
</reference>
<accession>B0TXY0</accession>